<accession>B7LAS7</accession>
<proteinExistence type="inferred from homology"/>
<organism>
    <name type="scientific">Escherichia coli (strain 55989 / EAEC)</name>
    <dbReference type="NCBI Taxonomy" id="585055"/>
    <lineage>
        <taxon>Bacteria</taxon>
        <taxon>Pseudomonadati</taxon>
        <taxon>Pseudomonadota</taxon>
        <taxon>Gammaproteobacteria</taxon>
        <taxon>Enterobacterales</taxon>
        <taxon>Enterobacteriaceae</taxon>
        <taxon>Escherichia</taxon>
    </lineage>
</organism>
<evidence type="ECO:0000255" key="1">
    <source>
        <dbReference type="HAMAP-Rule" id="MF_00470"/>
    </source>
</evidence>
<feature type="chain" id="PRO_1000135485" description="o-succinylbenzoate synthase">
    <location>
        <begin position="1"/>
        <end position="320"/>
    </location>
</feature>
<feature type="active site" description="Proton donor" evidence="1">
    <location>
        <position position="133"/>
    </location>
</feature>
<feature type="active site" description="Proton acceptor" evidence="1">
    <location>
        <position position="235"/>
    </location>
</feature>
<feature type="binding site" evidence="1">
    <location>
        <position position="161"/>
    </location>
    <ligand>
        <name>Mg(2+)</name>
        <dbReference type="ChEBI" id="CHEBI:18420"/>
    </ligand>
</feature>
<feature type="binding site" evidence="1">
    <location>
        <position position="190"/>
    </location>
    <ligand>
        <name>Mg(2+)</name>
        <dbReference type="ChEBI" id="CHEBI:18420"/>
    </ligand>
</feature>
<feature type="binding site" evidence="1">
    <location>
        <position position="213"/>
    </location>
    <ligand>
        <name>Mg(2+)</name>
        <dbReference type="ChEBI" id="CHEBI:18420"/>
    </ligand>
</feature>
<comment type="function">
    <text evidence="1">Converts 2-succinyl-6-hydroxy-2,4-cyclohexadiene-1-carboxylate (SHCHC) to 2-succinylbenzoate (OSB).</text>
</comment>
<comment type="catalytic activity">
    <reaction evidence="1">
        <text>(1R,6R)-6-hydroxy-2-succinyl-cyclohexa-2,4-diene-1-carboxylate = 2-succinylbenzoate + H2O</text>
        <dbReference type="Rhea" id="RHEA:10196"/>
        <dbReference type="ChEBI" id="CHEBI:15377"/>
        <dbReference type="ChEBI" id="CHEBI:18325"/>
        <dbReference type="ChEBI" id="CHEBI:58689"/>
        <dbReference type="EC" id="4.2.1.113"/>
    </reaction>
</comment>
<comment type="cofactor">
    <cofactor evidence="1">
        <name>a divalent metal cation</name>
        <dbReference type="ChEBI" id="CHEBI:60240"/>
    </cofactor>
</comment>
<comment type="pathway">
    <text evidence="1">Quinol/quinone metabolism; 1,4-dihydroxy-2-naphthoate biosynthesis; 1,4-dihydroxy-2-naphthoate from chorismate: step 4/7.</text>
</comment>
<comment type="pathway">
    <text evidence="1">Quinol/quinone metabolism; menaquinone biosynthesis.</text>
</comment>
<comment type="similarity">
    <text evidence="1">Belongs to the mandelate racemase/muconate lactonizing enzyme family. MenC type 1 subfamily.</text>
</comment>
<sequence>MRSAQVYRWQIPMDAGVVLRDRRLKTRDGLYVCLREGEREGWGEISPLPGFSQETWEEAQSVLLAWVNNWLAGDCELPQMPSVAFGVSCALAELADTLPQAANYRAAPLCNGDPDDLILKLADMPGEKVAKVKVGLYEAVRDGMVVNLLLEAIPDLHLRLDANRAWTPLKGQQFAKYVNPDYRHRIAFLEEPCKTRDDSRAFARETGIAIAWDESLREPDFAFVAEEGVRAVVIKPTLTGSLEKVREQVQAAHALGLTAVISSSIESSLGLTQLARIAAWLTPDTIPGLDTLDLMQAQQVRRWPGSTLPVVEVDALERLL</sequence>
<keyword id="KW-0456">Lyase</keyword>
<keyword id="KW-0460">Magnesium</keyword>
<keyword id="KW-0474">Menaquinone biosynthesis</keyword>
<keyword id="KW-0479">Metal-binding</keyword>
<keyword id="KW-1185">Reference proteome</keyword>
<dbReference type="EC" id="4.2.1.113" evidence="1"/>
<dbReference type="EMBL" id="CU928145">
    <property type="protein sequence ID" value="CAU98377.1"/>
    <property type="molecule type" value="Genomic_DNA"/>
</dbReference>
<dbReference type="RefSeq" id="WP_001255609.1">
    <property type="nucleotide sequence ID" value="NC_011748.1"/>
</dbReference>
<dbReference type="SMR" id="B7LAS7"/>
<dbReference type="GeneID" id="75205688"/>
<dbReference type="KEGG" id="eck:EC55989_2509"/>
<dbReference type="HOGENOM" id="CLU_030273_0_1_6"/>
<dbReference type="UniPathway" id="UPA00079"/>
<dbReference type="UniPathway" id="UPA01057">
    <property type="reaction ID" value="UER00165"/>
</dbReference>
<dbReference type="Proteomes" id="UP000000746">
    <property type="component" value="Chromosome"/>
</dbReference>
<dbReference type="GO" id="GO:0000287">
    <property type="term" value="F:magnesium ion binding"/>
    <property type="evidence" value="ECO:0007669"/>
    <property type="project" value="UniProtKB-UniRule"/>
</dbReference>
<dbReference type="GO" id="GO:0043748">
    <property type="term" value="F:O-succinylbenzoate synthase activity"/>
    <property type="evidence" value="ECO:0007669"/>
    <property type="project" value="UniProtKB-EC"/>
</dbReference>
<dbReference type="GO" id="GO:0009234">
    <property type="term" value="P:menaquinone biosynthetic process"/>
    <property type="evidence" value="ECO:0007669"/>
    <property type="project" value="UniProtKB-UniRule"/>
</dbReference>
<dbReference type="CDD" id="cd03320">
    <property type="entry name" value="OSBS"/>
    <property type="match status" value="1"/>
</dbReference>
<dbReference type="FunFam" id="3.20.20.120:FF:000006">
    <property type="entry name" value="o-succinylbenzoate synthase"/>
    <property type="match status" value="1"/>
</dbReference>
<dbReference type="FunFam" id="3.30.390.10:FF:000005">
    <property type="entry name" value="o-succinylbenzoate synthase"/>
    <property type="match status" value="1"/>
</dbReference>
<dbReference type="Gene3D" id="3.20.20.120">
    <property type="entry name" value="Enolase-like C-terminal domain"/>
    <property type="match status" value="1"/>
</dbReference>
<dbReference type="Gene3D" id="3.30.390.10">
    <property type="entry name" value="Enolase-like, N-terminal domain"/>
    <property type="match status" value="1"/>
</dbReference>
<dbReference type="HAMAP" id="MF_00470">
    <property type="entry name" value="MenC_1"/>
    <property type="match status" value="1"/>
</dbReference>
<dbReference type="InterPro" id="IPR036849">
    <property type="entry name" value="Enolase-like_C_sf"/>
</dbReference>
<dbReference type="InterPro" id="IPR029017">
    <property type="entry name" value="Enolase-like_N"/>
</dbReference>
<dbReference type="InterPro" id="IPR029065">
    <property type="entry name" value="Enolase_C-like"/>
</dbReference>
<dbReference type="InterPro" id="IPR013342">
    <property type="entry name" value="Mandelate_racemase_C"/>
</dbReference>
<dbReference type="InterPro" id="IPR010196">
    <property type="entry name" value="OSB_synthase_MenC1"/>
</dbReference>
<dbReference type="InterPro" id="IPR041338">
    <property type="entry name" value="OSBS_N"/>
</dbReference>
<dbReference type="NCBIfam" id="TIGR01927">
    <property type="entry name" value="menC_gam_Gplu"/>
    <property type="match status" value="1"/>
</dbReference>
<dbReference type="NCBIfam" id="NF003473">
    <property type="entry name" value="PRK05105.1"/>
    <property type="match status" value="1"/>
</dbReference>
<dbReference type="PANTHER" id="PTHR48073:SF2">
    <property type="entry name" value="O-SUCCINYLBENZOATE SYNTHASE"/>
    <property type="match status" value="1"/>
</dbReference>
<dbReference type="PANTHER" id="PTHR48073">
    <property type="entry name" value="O-SUCCINYLBENZOATE SYNTHASE-RELATED"/>
    <property type="match status" value="1"/>
</dbReference>
<dbReference type="Pfam" id="PF21508">
    <property type="entry name" value="MenC_N"/>
    <property type="match status" value="1"/>
</dbReference>
<dbReference type="Pfam" id="PF13378">
    <property type="entry name" value="MR_MLE_C"/>
    <property type="match status" value="1"/>
</dbReference>
<dbReference type="SFLD" id="SFLDS00001">
    <property type="entry name" value="Enolase"/>
    <property type="match status" value="1"/>
</dbReference>
<dbReference type="SFLD" id="SFLDF00009">
    <property type="entry name" value="o-succinylbenzoate_synthase"/>
    <property type="match status" value="1"/>
</dbReference>
<dbReference type="SMART" id="SM00922">
    <property type="entry name" value="MR_MLE"/>
    <property type="match status" value="1"/>
</dbReference>
<dbReference type="SUPFAM" id="SSF51604">
    <property type="entry name" value="Enolase C-terminal domain-like"/>
    <property type="match status" value="1"/>
</dbReference>
<dbReference type="SUPFAM" id="SSF54826">
    <property type="entry name" value="Enolase N-terminal domain-like"/>
    <property type="match status" value="1"/>
</dbReference>
<gene>
    <name evidence="1" type="primary">menC</name>
    <name type="ordered locus">EC55989_2509</name>
</gene>
<name>MENC_ECO55</name>
<reference key="1">
    <citation type="journal article" date="2009" name="PLoS Genet.">
        <title>Organised genome dynamics in the Escherichia coli species results in highly diverse adaptive paths.</title>
        <authorList>
            <person name="Touchon M."/>
            <person name="Hoede C."/>
            <person name="Tenaillon O."/>
            <person name="Barbe V."/>
            <person name="Baeriswyl S."/>
            <person name="Bidet P."/>
            <person name="Bingen E."/>
            <person name="Bonacorsi S."/>
            <person name="Bouchier C."/>
            <person name="Bouvet O."/>
            <person name="Calteau A."/>
            <person name="Chiapello H."/>
            <person name="Clermont O."/>
            <person name="Cruveiller S."/>
            <person name="Danchin A."/>
            <person name="Diard M."/>
            <person name="Dossat C."/>
            <person name="Karoui M.E."/>
            <person name="Frapy E."/>
            <person name="Garry L."/>
            <person name="Ghigo J.M."/>
            <person name="Gilles A.M."/>
            <person name="Johnson J."/>
            <person name="Le Bouguenec C."/>
            <person name="Lescat M."/>
            <person name="Mangenot S."/>
            <person name="Martinez-Jehanne V."/>
            <person name="Matic I."/>
            <person name="Nassif X."/>
            <person name="Oztas S."/>
            <person name="Petit M.A."/>
            <person name="Pichon C."/>
            <person name="Rouy Z."/>
            <person name="Ruf C.S."/>
            <person name="Schneider D."/>
            <person name="Tourret J."/>
            <person name="Vacherie B."/>
            <person name="Vallenet D."/>
            <person name="Medigue C."/>
            <person name="Rocha E.P.C."/>
            <person name="Denamur E."/>
        </authorList>
    </citation>
    <scope>NUCLEOTIDE SEQUENCE [LARGE SCALE GENOMIC DNA]</scope>
    <source>
        <strain>55989 / EAEC</strain>
    </source>
</reference>
<protein>
    <recommendedName>
        <fullName evidence="1">o-succinylbenzoate synthase</fullName>
        <shortName evidence="1">OSB synthase</shortName>
        <shortName evidence="1">OSBS</shortName>
        <ecNumber evidence="1">4.2.1.113</ecNumber>
    </recommendedName>
    <alternativeName>
        <fullName evidence="1">4-(2'-carboxyphenyl)-4-oxybutyric acid synthase</fullName>
    </alternativeName>
    <alternativeName>
        <fullName evidence="1">o-succinylbenzoic acid synthase</fullName>
    </alternativeName>
</protein>